<sequence>IMSCHDVGGRRRFEDSEFTLRVYPGSLSESTIYCPVSARKVTTAAEVIERVIERLQLDRTRLYVLAEVKEFGGEEWILNPSDCPAQRMMLWPRMALENRLLGEDYRFLLREKNLDGSIHYGSLQMWLRVTEERRRMVERGLLPQPPAAQFVADLCSLPDLNEHTMLENLRGRFRQENIYTYVGSILIAVNPFKFLPIYNPKYVKMYDKHRLGQLEPHIFAVADAAYHAMLQRHRNQCIVISGESGSGKTQSTNFLIHHLTALSQKGFASGVEQIILGAGPVLEAFGNAKTAHNNNSSRFGKFIQVNYQESGTVRGAYVEKYLLEKSRLVYQEHNERCSCVNIFSKLVCHELKVCVCMCVQDCFSVEAEDLKHDFERLQLAMEMVGFLPTTRKQIFSLLSAILHLGNIRYKKKTFRDDSIDICNPEVLPIVSELLEVKEEMLFEALTTRKTVTVGERLIVPYKLAEVRKGTSHQLIQTFRTSHSLLHQRYFHIHTSPTRILSIGVLDIFGFEDYENNSFEQFCINFANETLQHYFNQHVFKLEQEEYRSEGINWHMIDYIDNTACINLISKKPTALLHLLDEECNFPQASNQTLLDKFKRQHEGNAYMEFPAVMEPAFIIRHYAGKVKYSVKDFREKNTDHLRPDIVSLLKSSRKAFICGLMGLDPVASFRWAVIRAFFRALVAFRHAGLQHRDNRSSSDVHLQPQKSVDSFSFLHHPVHQRSLEILQRCKDDRYNSCVSRRSPRTPLSDLQGANTFSSNGRGWRSERVSSFAHEDEGIFVNSVNNRLLERAQGILMRNKNYKPKPSLPKHLLDVKSLKYLSSLTLHDRITKSLLHLHKKKKPPSISAQFNVSLNKLMETLGQSEPYFVKCIRSNAEKLPLRFNDALVLRQLRYTGMLETVRIRQSGYSVKYSFKDFAHHFHVLLPAGFSASQMGIREFLRSADLEPSGYQVGRSMVFLHERLRQRLQDELHQEVLRRIVCLQRSFRTQRDRKHFCRQRRAARLIQRWWRSCISQADGSVCALELQQGAALRLQAVWRGFRARRLYLQQRRAVLIIQRCWRRVLNTRNTAATLIQAVWRTRTHRRSFLQQRRAAVTLQAACRGQQSRQRCRILREQQCREQSKHPSTVTKSLHQNTEEAEKLEEVWEKQTTDPPPKAVDDSTLKSRNKRESRRQRELEQATFSLELLKVRSGSNTEDAQIPPSKHHPPHQASTDSQESFELLENEDSASAKLELSKSEPMEVNQTSPAASFKPHFYIPDEDGSPINSAPQTPNRAKQIREKKESVVVIISMQKENPVDRSSLQTLEAQDVPLSNGESASDCSIIPEPRTNHELDTGSSFSVSSKPLQLDLRSAASNEEPSEPKADVQKKFVSQSISISMKETAANVAFPPKRSRLTFSKSDKDLVNQERSLAIQREAGFRSLKNRDVTRAGCKKKARMARTRSDFLSRACSTEADCEEDEDDEYEDTPVLSCTRPPHSPSSPDIDCVFHSDSEMSSQKEQKRIQKTMSSGDLGKMDSLRKSMSQTDSRVRGKMRFWSKSKHGDKKISSRGRSADSELTDRRNDSPPGSPEHAGVSERRRDSKENREPMLGMMSMKRRRSLKISSVSLESTAWQNDALHILTSTADYRSMNDFLMKKISDLDAEDGQKDTAVDVVFKKALKEFRLNIFNSYSTALAMDDGRSIRYKDLYALFEHILEKSMRLEQRDWSESPVKVWVNTFKVFLDEFMTEYKPMDGTISKAPKPERKKRRKKESDTVEEHMGHIFKSTQYSIPTYCEFCSSLIWMMDKACVCKLCRYACHKKCCLRMTTKCSKKFDPELSSRQFGVELSRLTSDERSVPLVVEKLINYIEMHGLYTEGIYRKSGSTNKIKELKQGLDTDANSVNLDDYNIHVIASVLKQWLRDLPNPLMTFELYEEFLRAMGLQDKREVVQGVYSIIDQLSRTHLNTLERLIFHLVRISFQEETNRMSANALAIVFAPCILRCPDTTDPLQSVRDISKTTACVELIICEQMRKYKARLKDINTLEFAENKAKSRLTHIRRSMGKSRARKSGHHTPSPPLSPRASEREEPVDEGAEPVLSEQQQAAMQQEEKVLTQQIENLQKEKEELTYEMLALEPRASDDEMLESEASIGTADSSENLMESEGAASDPWEKSPGAVSASRWRKSESKSRRCLRRQPESLDSVDSAVASLSSVSSTPHYRFRSSSSGPLFSSSSPTGDLHILPDPESCEQASLSARCASSSEKTRPRPRANRSCPPKPREPGDTGGRRREHEFGSSQPLVLYGSNEFMV</sequence>
<protein>
    <recommendedName>
        <fullName evidence="1">Unconventional myosin-IXAb</fullName>
    </recommendedName>
    <alternativeName>
        <fullName>Myosin IXAb</fullName>
    </alternativeName>
</protein>
<evidence type="ECO:0000250" key="1">
    <source>
        <dbReference type="UniProtKB" id="B2RTY4"/>
    </source>
</evidence>
<evidence type="ECO:0000250" key="2">
    <source>
        <dbReference type="UniProtKB" id="Q8C170"/>
    </source>
</evidence>
<evidence type="ECO:0000250" key="3">
    <source>
        <dbReference type="UniProtKB" id="Q9Z1N3"/>
    </source>
</evidence>
<evidence type="ECO:0000255" key="4"/>
<evidence type="ECO:0000255" key="5">
    <source>
        <dbReference type="PROSITE-ProRule" id="PRU00116"/>
    </source>
</evidence>
<evidence type="ECO:0000255" key="6">
    <source>
        <dbReference type="PROSITE-ProRule" id="PRU00166"/>
    </source>
</evidence>
<evidence type="ECO:0000255" key="7">
    <source>
        <dbReference type="PROSITE-ProRule" id="PRU00172"/>
    </source>
</evidence>
<evidence type="ECO:0000255" key="8">
    <source>
        <dbReference type="PROSITE-ProRule" id="PRU00226"/>
    </source>
</evidence>
<evidence type="ECO:0000255" key="9">
    <source>
        <dbReference type="PROSITE-ProRule" id="PRU00782"/>
    </source>
</evidence>
<evidence type="ECO:0000256" key="10">
    <source>
        <dbReference type="SAM" id="MobiDB-lite"/>
    </source>
</evidence>
<evidence type="ECO:0000269" key="11">
    <source>
    </source>
</evidence>
<gene>
    <name type="primary">myo9ab</name>
</gene>
<keyword id="KW-0009">Actin-binding</keyword>
<keyword id="KW-0067">ATP-binding</keyword>
<keyword id="KW-0966">Cell projection</keyword>
<keyword id="KW-0175">Coiled coil</keyword>
<keyword id="KW-0963">Cytoplasm</keyword>
<keyword id="KW-0343">GTPase activation</keyword>
<keyword id="KW-0472">Membrane</keyword>
<keyword id="KW-0479">Metal-binding</keyword>
<keyword id="KW-0505">Motor protein</keyword>
<keyword id="KW-0518">Myosin</keyword>
<keyword id="KW-0547">Nucleotide-binding</keyword>
<keyword id="KW-0597">Phosphoprotein</keyword>
<keyword id="KW-1185">Reference proteome</keyword>
<keyword id="KW-0770">Synapse</keyword>
<keyword id="KW-0812">Transmembrane</keyword>
<keyword id="KW-1133">Transmembrane helix</keyword>
<keyword id="KW-0862">Zinc</keyword>
<keyword id="KW-0863">Zinc-finger</keyword>
<comment type="function">
    <text evidence="3 11">Myosins are actin-based motor molecules with ATPase activity. Unconventional myosins serve in intracellular movements. Regulates Rho by stimulating it's GTPase activity in neurons (By similarity). Required for the regulation of neurite branching and motor neuron axon guidance (PubMed:27259756).</text>
</comment>
<comment type="subcellular location">
    <subcellularLocation>
        <location evidence="4">Membrane</location>
        <topology evidence="4">Single-pass membrane protein</topology>
    </subcellularLocation>
    <subcellularLocation>
        <location evidence="3">Cytoplasm</location>
    </subcellularLocation>
    <subcellularLocation>
        <location evidence="2">Synapse</location>
    </subcellularLocation>
    <subcellularLocation>
        <location evidence="2">Cell projection</location>
        <location evidence="2">Growth cone</location>
    </subcellularLocation>
    <text evidence="2 3">Localized in the cytoplasm of cell bodies, dendrites and axons with occasional hints of an enrichment near the plasma membrane. Localized at the neuromuscular junction.</text>
</comment>
<comment type="disruption phenotype">
    <text evidence="11">Morpholino-induced knockdown affects tail morphology, and causes cardiac edema and abnormal swimming in response to tactile stimulation. Morphants show aberrant axons, either short or over-extended, with some axons appearing to branch to the adjacent myotome.</text>
</comment>
<comment type="similarity">
    <text evidence="9">Belongs to the TRAFAC class myosin-kinesin ATPase superfamily. Myosin family.</text>
</comment>
<dbReference type="EMBL" id="CABZ01074925">
    <property type="status" value="NOT_ANNOTATED_CDS"/>
    <property type="molecule type" value="Genomic_DNA"/>
</dbReference>
<dbReference type="EMBL" id="CABZ01074926">
    <property type="status" value="NOT_ANNOTATED_CDS"/>
    <property type="molecule type" value="Genomic_DNA"/>
</dbReference>
<dbReference type="EMBL" id="CABZ01074927">
    <property type="status" value="NOT_ANNOTATED_CDS"/>
    <property type="molecule type" value="Genomic_DNA"/>
</dbReference>
<dbReference type="EMBL" id="CABZ01074928">
    <property type="status" value="NOT_ANNOTATED_CDS"/>
    <property type="molecule type" value="Genomic_DNA"/>
</dbReference>
<dbReference type="EMBL" id="CABZ01074929">
    <property type="status" value="NOT_ANNOTATED_CDS"/>
    <property type="molecule type" value="Genomic_DNA"/>
</dbReference>
<dbReference type="EMBL" id="CABZ01074930">
    <property type="status" value="NOT_ANNOTATED_CDS"/>
    <property type="molecule type" value="Genomic_DNA"/>
</dbReference>
<dbReference type="EMBL" id="CU633744">
    <property type="status" value="NOT_ANNOTATED_CDS"/>
    <property type="molecule type" value="Genomic_DNA"/>
</dbReference>
<dbReference type="SMR" id="E7F3F0"/>
<dbReference type="FunCoup" id="E7F3F0">
    <property type="interactions" value="126"/>
</dbReference>
<dbReference type="STRING" id="7955.ENSDARP00000032580"/>
<dbReference type="PaxDb" id="7955-ENSDARP00000032580"/>
<dbReference type="Ensembl" id="ENSDART00000028997">
    <property type="protein sequence ID" value="ENSDARP00000032580"/>
    <property type="gene ID" value="ENSDARG00000073843"/>
</dbReference>
<dbReference type="eggNOG" id="KOG1453">
    <property type="taxonomic scope" value="Eukaryota"/>
</dbReference>
<dbReference type="eggNOG" id="KOG4229">
    <property type="taxonomic scope" value="Eukaryota"/>
</dbReference>
<dbReference type="HOGENOM" id="CLU_000192_2_1_1"/>
<dbReference type="InParanoid" id="E7F3F0"/>
<dbReference type="OMA" id="FINQRQA"/>
<dbReference type="TreeFam" id="TF319651"/>
<dbReference type="Proteomes" id="UP000000437">
    <property type="component" value="Unplaced"/>
</dbReference>
<dbReference type="Bgee" id="ENSDARG00000073843">
    <property type="expression patterns" value="Expressed in brain and 20 other cell types or tissues"/>
</dbReference>
<dbReference type="ExpressionAtlas" id="E7F3F0">
    <property type="expression patterns" value="baseline and differential"/>
</dbReference>
<dbReference type="GO" id="GO:0005737">
    <property type="term" value="C:cytoplasm"/>
    <property type="evidence" value="ECO:0007669"/>
    <property type="project" value="UniProtKB-SubCell"/>
</dbReference>
<dbReference type="GO" id="GO:0030426">
    <property type="term" value="C:growth cone"/>
    <property type="evidence" value="ECO:0007669"/>
    <property type="project" value="UniProtKB-SubCell"/>
</dbReference>
<dbReference type="GO" id="GO:0016020">
    <property type="term" value="C:membrane"/>
    <property type="evidence" value="ECO:0007669"/>
    <property type="project" value="UniProtKB-SubCell"/>
</dbReference>
<dbReference type="GO" id="GO:0016459">
    <property type="term" value="C:myosin complex"/>
    <property type="evidence" value="ECO:0007669"/>
    <property type="project" value="UniProtKB-KW"/>
</dbReference>
<dbReference type="GO" id="GO:0045202">
    <property type="term" value="C:synapse"/>
    <property type="evidence" value="ECO:0007669"/>
    <property type="project" value="UniProtKB-SubCell"/>
</dbReference>
<dbReference type="GO" id="GO:0003779">
    <property type="term" value="F:actin binding"/>
    <property type="evidence" value="ECO:0007669"/>
    <property type="project" value="UniProtKB-KW"/>
</dbReference>
<dbReference type="GO" id="GO:0005524">
    <property type="term" value="F:ATP binding"/>
    <property type="evidence" value="ECO:0007669"/>
    <property type="project" value="UniProtKB-KW"/>
</dbReference>
<dbReference type="GO" id="GO:0005096">
    <property type="term" value="F:GTPase activator activity"/>
    <property type="evidence" value="ECO:0007669"/>
    <property type="project" value="InterPro"/>
</dbReference>
<dbReference type="GO" id="GO:0000146">
    <property type="term" value="F:microfilament motor activity"/>
    <property type="evidence" value="ECO:0007669"/>
    <property type="project" value="InterPro"/>
</dbReference>
<dbReference type="GO" id="GO:0008270">
    <property type="term" value="F:zinc ion binding"/>
    <property type="evidence" value="ECO:0007669"/>
    <property type="project" value="UniProtKB-KW"/>
</dbReference>
<dbReference type="GO" id="GO:0035556">
    <property type="term" value="P:intracellular signal transduction"/>
    <property type="evidence" value="ECO:0007669"/>
    <property type="project" value="InterPro"/>
</dbReference>
<dbReference type="GO" id="GO:0048731">
    <property type="term" value="P:system development"/>
    <property type="evidence" value="ECO:0007669"/>
    <property type="project" value="UniProtKB-ARBA"/>
</dbReference>
<dbReference type="CDD" id="cd20883">
    <property type="entry name" value="C1_Myosin-IXa"/>
    <property type="match status" value="1"/>
</dbReference>
<dbReference type="CDD" id="cd04406">
    <property type="entry name" value="RhoGAP_myosin_IXA"/>
    <property type="match status" value="1"/>
</dbReference>
<dbReference type="FunFam" id="3.30.60.20:FF:000020">
    <property type="entry name" value="Putative unconventional myosin-IXa"/>
    <property type="match status" value="1"/>
</dbReference>
<dbReference type="FunFam" id="3.40.850.10:FF:000008">
    <property type="entry name" value="Putative unconventional myosin-IXa"/>
    <property type="match status" value="1"/>
</dbReference>
<dbReference type="FunFam" id="1.10.555.10:FF:000009">
    <property type="entry name" value="unconventional myosin-IXa isoform X1"/>
    <property type="match status" value="1"/>
</dbReference>
<dbReference type="FunFam" id="1.20.58.530:FF:000005">
    <property type="entry name" value="unconventional myosin-IXa isoform X1"/>
    <property type="match status" value="1"/>
</dbReference>
<dbReference type="FunFam" id="3.10.20.90:FF:000121">
    <property type="entry name" value="unconventional myosin-IXa isoform X1"/>
    <property type="match status" value="1"/>
</dbReference>
<dbReference type="FunFam" id="3.40.850.10:FF:000013">
    <property type="entry name" value="unconventional myosin-IXa isoform X1"/>
    <property type="match status" value="1"/>
</dbReference>
<dbReference type="Gene3D" id="1.10.10.820">
    <property type="match status" value="1"/>
</dbReference>
<dbReference type="Gene3D" id="1.20.5.190">
    <property type="match status" value="2"/>
</dbReference>
<dbReference type="Gene3D" id="1.20.5.4820">
    <property type="match status" value="1"/>
</dbReference>
<dbReference type="Gene3D" id="1.20.58.530">
    <property type="match status" value="2"/>
</dbReference>
<dbReference type="Gene3D" id="3.30.60.20">
    <property type="match status" value="1"/>
</dbReference>
<dbReference type="Gene3D" id="3.40.850.10">
    <property type="entry name" value="Kinesin motor domain"/>
    <property type="match status" value="2"/>
</dbReference>
<dbReference type="Gene3D" id="1.20.120.720">
    <property type="entry name" value="Myosin VI head, motor domain, U50 subdomain"/>
    <property type="match status" value="1"/>
</dbReference>
<dbReference type="Gene3D" id="3.10.20.90">
    <property type="entry name" value="Phosphatidylinositol 3-kinase Catalytic Subunit, Chain A, domain 1"/>
    <property type="match status" value="1"/>
</dbReference>
<dbReference type="Gene3D" id="1.10.555.10">
    <property type="entry name" value="Rho GTPase activation protein"/>
    <property type="match status" value="1"/>
</dbReference>
<dbReference type="InterPro" id="IPR046349">
    <property type="entry name" value="C1-like_sf"/>
</dbReference>
<dbReference type="InterPro" id="IPR000048">
    <property type="entry name" value="IQ_motif_EF-hand-BS"/>
</dbReference>
<dbReference type="InterPro" id="IPR036961">
    <property type="entry name" value="Kinesin_motor_dom_sf"/>
</dbReference>
<dbReference type="InterPro" id="IPR046987">
    <property type="entry name" value="Myo9"/>
</dbReference>
<dbReference type="InterPro" id="IPR001609">
    <property type="entry name" value="Myosin_head_motor_dom-like"/>
</dbReference>
<dbReference type="InterPro" id="IPR027417">
    <property type="entry name" value="P-loop_NTPase"/>
</dbReference>
<dbReference type="InterPro" id="IPR002219">
    <property type="entry name" value="PE/DAG-bd"/>
</dbReference>
<dbReference type="InterPro" id="IPR000159">
    <property type="entry name" value="RA_dom"/>
</dbReference>
<dbReference type="InterPro" id="IPR008936">
    <property type="entry name" value="Rho_GTPase_activation_prot"/>
</dbReference>
<dbReference type="InterPro" id="IPR000198">
    <property type="entry name" value="RhoGAP_dom"/>
</dbReference>
<dbReference type="InterPro" id="IPR029071">
    <property type="entry name" value="Ubiquitin-like_domsf"/>
</dbReference>
<dbReference type="PANTHER" id="PTHR46184:SF3">
    <property type="entry name" value="UNCONVENTIONAL MYOSIN-IXA"/>
    <property type="match status" value="1"/>
</dbReference>
<dbReference type="PANTHER" id="PTHR46184">
    <property type="entry name" value="UNCONVENTIONAL MYOSIN-IXB-LIKE PROTEIN"/>
    <property type="match status" value="1"/>
</dbReference>
<dbReference type="Pfam" id="PF00612">
    <property type="entry name" value="IQ"/>
    <property type="match status" value="2"/>
</dbReference>
<dbReference type="Pfam" id="PF00063">
    <property type="entry name" value="Myosin_head"/>
    <property type="match status" value="2"/>
</dbReference>
<dbReference type="Pfam" id="PF00788">
    <property type="entry name" value="RA"/>
    <property type="match status" value="1"/>
</dbReference>
<dbReference type="Pfam" id="PF00620">
    <property type="entry name" value="RhoGAP"/>
    <property type="match status" value="1"/>
</dbReference>
<dbReference type="PRINTS" id="PR00193">
    <property type="entry name" value="MYOSINHEAVY"/>
</dbReference>
<dbReference type="SMART" id="SM00109">
    <property type="entry name" value="C1"/>
    <property type="match status" value="1"/>
</dbReference>
<dbReference type="SMART" id="SM00015">
    <property type="entry name" value="IQ"/>
    <property type="match status" value="4"/>
</dbReference>
<dbReference type="SMART" id="SM00242">
    <property type="entry name" value="MYSc"/>
    <property type="match status" value="1"/>
</dbReference>
<dbReference type="SMART" id="SM00314">
    <property type="entry name" value="RA"/>
    <property type="match status" value="1"/>
</dbReference>
<dbReference type="SMART" id="SM00324">
    <property type="entry name" value="RhoGAP"/>
    <property type="match status" value="1"/>
</dbReference>
<dbReference type="SUPFAM" id="SSF57889">
    <property type="entry name" value="Cysteine-rich domain"/>
    <property type="match status" value="1"/>
</dbReference>
<dbReference type="SUPFAM" id="SSF48350">
    <property type="entry name" value="GTPase activation domain, GAP"/>
    <property type="match status" value="1"/>
</dbReference>
<dbReference type="SUPFAM" id="SSF52540">
    <property type="entry name" value="P-loop containing nucleoside triphosphate hydrolases"/>
    <property type="match status" value="1"/>
</dbReference>
<dbReference type="SUPFAM" id="SSF54236">
    <property type="entry name" value="Ubiquitin-like"/>
    <property type="match status" value="1"/>
</dbReference>
<dbReference type="PROSITE" id="PS50096">
    <property type="entry name" value="IQ"/>
    <property type="match status" value="3"/>
</dbReference>
<dbReference type="PROSITE" id="PS51456">
    <property type="entry name" value="MYOSIN_MOTOR"/>
    <property type="match status" value="1"/>
</dbReference>
<dbReference type="PROSITE" id="PS50200">
    <property type="entry name" value="RA"/>
    <property type="match status" value="1"/>
</dbReference>
<dbReference type="PROSITE" id="PS50238">
    <property type="entry name" value="RHOGAP"/>
    <property type="match status" value="1"/>
</dbReference>
<dbReference type="PROSITE" id="PS00479">
    <property type="entry name" value="ZF_DAG_PE_1"/>
    <property type="match status" value="1"/>
</dbReference>
<dbReference type="PROSITE" id="PS50081">
    <property type="entry name" value="ZF_DAG_PE_2"/>
    <property type="match status" value="1"/>
</dbReference>
<feature type="chain" id="PRO_0000447240" description="Unconventional myosin-IXAb">
    <location>
        <begin position="1"/>
        <end position="2286"/>
    </location>
</feature>
<feature type="transmembrane region" description="Helical" evidence="4">
    <location>
        <begin position="178"/>
        <end position="198"/>
    </location>
</feature>
<feature type="domain" description="Ras-associating" evidence="6">
    <location>
        <begin position="16"/>
        <end position="114"/>
    </location>
</feature>
<feature type="domain" description="Myosin motor" evidence="9">
    <location>
        <begin position="148"/>
        <end position="971"/>
    </location>
</feature>
<feature type="domain" description="IQ 1" evidence="5">
    <location>
        <begin position="976"/>
        <end position="996"/>
    </location>
</feature>
<feature type="domain" description="IQ 2" evidence="5">
    <location>
        <begin position="1025"/>
        <end position="1054"/>
    </location>
</feature>
<feature type="domain" description="IQ 3" evidence="5">
    <location>
        <begin position="1066"/>
        <end position="1095"/>
    </location>
</feature>
<feature type="domain" description="IQ 4" evidence="5">
    <location>
        <begin position="1089"/>
        <end position="1118"/>
    </location>
</feature>
<feature type="domain" description="Rho-GAP" evidence="7">
    <location>
        <begin position="1823"/>
        <end position="2011"/>
    </location>
</feature>
<feature type="zinc finger region" description="Phorbol-ester/DAG-type" evidence="8">
    <location>
        <begin position="1759"/>
        <end position="1808"/>
    </location>
</feature>
<feature type="region of interest" description="Actin-binding" evidence="9">
    <location>
        <begin position="853"/>
        <end position="875"/>
    </location>
</feature>
<feature type="region of interest" description="Neck or regulatory domain" evidence="1">
    <location>
        <begin position="976"/>
        <end position="1113"/>
    </location>
</feature>
<feature type="region of interest" description="Tail" evidence="1">
    <location>
        <begin position="1114"/>
        <end position="2254"/>
    </location>
</feature>
<feature type="region of interest" description="Disordered" evidence="10">
    <location>
        <begin position="1118"/>
        <end position="1279"/>
    </location>
</feature>
<feature type="region of interest" description="Disordered" evidence="10">
    <location>
        <begin position="1308"/>
        <end position="1341"/>
    </location>
</feature>
<feature type="region of interest" description="Disordered" evidence="10">
    <location>
        <begin position="1455"/>
        <end position="1588"/>
    </location>
</feature>
<feature type="region of interest" description="Disordered" evidence="10">
    <location>
        <begin position="1732"/>
        <end position="1754"/>
    </location>
</feature>
<feature type="region of interest" description="Disordered" evidence="10">
    <location>
        <begin position="2032"/>
        <end position="2087"/>
    </location>
</feature>
<feature type="region of interest" description="Disordered" evidence="10">
    <location>
        <begin position="2113"/>
        <end position="2286"/>
    </location>
</feature>
<feature type="coiled-coil region" evidence="4">
    <location>
        <begin position="2080"/>
        <end position="2107"/>
    </location>
</feature>
<feature type="compositionally biased region" description="Polar residues" evidence="10">
    <location>
        <begin position="1123"/>
        <end position="1133"/>
    </location>
</feature>
<feature type="compositionally biased region" description="Basic and acidic residues" evidence="10">
    <location>
        <begin position="1134"/>
        <end position="1149"/>
    </location>
</feature>
<feature type="compositionally biased region" description="Polar residues" evidence="10">
    <location>
        <begin position="1263"/>
        <end position="1273"/>
    </location>
</feature>
<feature type="compositionally biased region" description="Acidic residues" evidence="10">
    <location>
        <begin position="1455"/>
        <end position="1465"/>
    </location>
</feature>
<feature type="compositionally biased region" description="Basic and acidic residues" evidence="10">
    <location>
        <begin position="1485"/>
        <end position="1501"/>
    </location>
</feature>
<feature type="compositionally biased region" description="Basic residues" evidence="10">
    <location>
        <begin position="1529"/>
        <end position="1542"/>
    </location>
</feature>
<feature type="compositionally biased region" description="Basic and acidic residues" evidence="10">
    <location>
        <begin position="1550"/>
        <end position="1562"/>
    </location>
</feature>
<feature type="compositionally biased region" description="Basic and acidic residues" evidence="10">
    <location>
        <begin position="1572"/>
        <end position="1585"/>
    </location>
</feature>
<feature type="compositionally biased region" description="Basic residues" evidence="10">
    <location>
        <begin position="2032"/>
        <end position="2049"/>
    </location>
</feature>
<feature type="compositionally biased region" description="Low complexity" evidence="10">
    <location>
        <begin position="2176"/>
        <end position="2192"/>
    </location>
</feature>
<feature type="compositionally biased region" description="Low complexity" evidence="10">
    <location>
        <begin position="2200"/>
        <end position="2211"/>
    </location>
</feature>
<feature type="compositionally biased region" description="Polar residues" evidence="10">
    <location>
        <begin position="2226"/>
        <end position="2238"/>
    </location>
</feature>
<feature type="compositionally biased region" description="Basic and acidic residues" evidence="10">
    <location>
        <begin position="2254"/>
        <end position="2270"/>
    </location>
</feature>
<feature type="binding site" evidence="4">
    <location>
        <begin position="242"/>
        <end position="249"/>
    </location>
    <ligand>
        <name>ATP</name>
        <dbReference type="ChEBI" id="CHEBI:30616"/>
    </ligand>
</feature>
<feature type="site" description="Arginine finger; crucial for GTP hydrolysis by stabilizing the transition state" evidence="7">
    <location>
        <position position="1858"/>
    </location>
</feature>
<name>MY9AB_DANRE</name>
<organism>
    <name type="scientific">Danio rerio</name>
    <name type="common">Zebrafish</name>
    <name type="synonym">Brachydanio rerio</name>
    <dbReference type="NCBI Taxonomy" id="7955"/>
    <lineage>
        <taxon>Eukaryota</taxon>
        <taxon>Metazoa</taxon>
        <taxon>Chordata</taxon>
        <taxon>Craniata</taxon>
        <taxon>Vertebrata</taxon>
        <taxon>Euteleostomi</taxon>
        <taxon>Actinopterygii</taxon>
        <taxon>Neopterygii</taxon>
        <taxon>Teleostei</taxon>
        <taxon>Ostariophysi</taxon>
        <taxon>Cypriniformes</taxon>
        <taxon>Danionidae</taxon>
        <taxon>Danioninae</taxon>
        <taxon>Danio</taxon>
    </lineage>
</organism>
<accession>E7F3F0</accession>
<reference key="1">
    <citation type="journal article" date="2013" name="Nature">
        <title>The zebrafish reference genome sequence and its relationship to the human genome.</title>
        <authorList>
            <person name="Howe K."/>
            <person name="Clark M.D."/>
            <person name="Torroja C.F."/>
            <person name="Torrance J."/>
            <person name="Berthelot C."/>
            <person name="Muffato M."/>
            <person name="Collins J.E."/>
            <person name="Humphray S."/>
            <person name="McLaren K."/>
            <person name="Matthews L."/>
            <person name="McLaren S."/>
            <person name="Sealy I."/>
            <person name="Caccamo M."/>
            <person name="Churcher C."/>
            <person name="Scott C."/>
            <person name="Barrett J.C."/>
            <person name="Koch R."/>
            <person name="Rauch G.J."/>
            <person name="White S."/>
            <person name="Chow W."/>
            <person name="Kilian B."/>
            <person name="Quintais L.T."/>
            <person name="Guerra-Assuncao J.A."/>
            <person name="Zhou Y."/>
            <person name="Gu Y."/>
            <person name="Yen J."/>
            <person name="Vogel J.H."/>
            <person name="Eyre T."/>
            <person name="Redmond S."/>
            <person name="Banerjee R."/>
            <person name="Chi J."/>
            <person name="Fu B."/>
            <person name="Langley E."/>
            <person name="Maguire S.F."/>
            <person name="Laird G.K."/>
            <person name="Lloyd D."/>
            <person name="Kenyon E."/>
            <person name="Donaldson S."/>
            <person name="Sehra H."/>
            <person name="Almeida-King J."/>
            <person name="Loveland J."/>
            <person name="Trevanion S."/>
            <person name="Jones M."/>
            <person name="Quail M."/>
            <person name="Willey D."/>
            <person name="Hunt A."/>
            <person name="Burton J."/>
            <person name="Sims S."/>
            <person name="McLay K."/>
            <person name="Plumb B."/>
            <person name="Davis J."/>
            <person name="Clee C."/>
            <person name="Oliver K."/>
            <person name="Clark R."/>
            <person name="Riddle C."/>
            <person name="Elliot D."/>
            <person name="Threadgold G."/>
            <person name="Harden G."/>
            <person name="Ware D."/>
            <person name="Begum S."/>
            <person name="Mortimore B."/>
            <person name="Kerry G."/>
            <person name="Heath P."/>
            <person name="Phillimore B."/>
            <person name="Tracey A."/>
            <person name="Corby N."/>
            <person name="Dunn M."/>
            <person name="Johnson C."/>
            <person name="Wood J."/>
            <person name="Clark S."/>
            <person name="Pelan S."/>
            <person name="Griffiths G."/>
            <person name="Smith M."/>
            <person name="Glithero R."/>
            <person name="Howden P."/>
            <person name="Barker N."/>
            <person name="Lloyd C."/>
            <person name="Stevens C."/>
            <person name="Harley J."/>
            <person name="Holt K."/>
            <person name="Panagiotidis G."/>
            <person name="Lovell J."/>
            <person name="Beasley H."/>
            <person name="Henderson C."/>
            <person name="Gordon D."/>
            <person name="Auger K."/>
            <person name="Wright D."/>
            <person name="Collins J."/>
            <person name="Raisen C."/>
            <person name="Dyer L."/>
            <person name="Leung K."/>
            <person name="Robertson L."/>
            <person name="Ambridge K."/>
            <person name="Leongamornlert D."/>
            <person name="McGuire S."/>
            <person name="Gilderthorp R."/>
            <person name="Griffiths C."/>
            <person name="Manthravadi D."/>
            <person name="Nichol S."/>
            <person name="Barker G."/>
            <person name="Whitehead S."/>
            <person name="Kay M."/>
            <person name="Brown J."/>
            <person name="Murnane C."/>
            <person name="Gray E."/>
            <person name="Humphries M."/>
            <person name="Sycamore N."/>
            <person name="Barker D."/>
            <person name="Saunders D."/>
            <person name="Wallis J."/>
            <person name="Babbage A."/>
            <person name="Hammond S."/>
            <person name="Mashreghi-Mohammadi M."/>
            <person name="Barr L."/>
            <person name="Martin S."/>
            <person name="Wray P."/>
            <person name="Ellington A."/>
            <person name="Matthews N."/>
            <person name="Ellwood M."/>
            <person name="Woodmansey R."/>
            <person name="Clark G."/>
            <person name="Cooper J."/>
            <person name="Tromans A."/>
            <person name="Grafham D."/>
            <person name="Skuce C."/>
            <person name="Pandian R."/>
            <person name="Andrews R."/>
            <person name="Harrison E."/>
            <person name="Kimberley A."/>
            <person name="Garnett J."/>
            <person name="Fosker N."/>
            <person name="Hall R."/>
            <person name="Garner P."/>
            <person name="Kelly D."/>
            <person name="Bird C."/>
            <person name="Palmer S."/>
            <person name="Gehring I."/>
            <person name="Berger A."/>
            <person name="Dooley C.M."/>
            <person name="Ersan-Urun Z."/>
            <person name="Eser C."/>
            <person name="Geiger H."/>
            <person name="Geisler M."/>
            <person name="Karotki L."/>
            <person name="Kirn A."/>
            <person name="Konantz J."/>
            <person name="Konantz M."/>
            <person name="Oberlander M."/>
            <person name="Rudolph-Geiger S."/>
            <person name="Teucke M."/>
            <person name="Lanz C."/>
            <person name="Raddatz G."/>
            <person name="Osoegawa K."/>
            <person name="Zhu B."/>
            <person name="Rapp A."/>
            <person name="Widaa S."/>
            <person name="Langford C."/>
            <person name="Yang F."/>
            <person name="Schuster S.C."/>
            <person name="Carter N.P."/>
            <person name="Harrow J."/>
            <person name="Ning Z."/>
            <person name="Herrero J."/>
            <person name="Searle S.M."/>
            <person name="Enright A."/>
            <person name="Geisler R."/>
            <person name="Plasterk R.H."/>
            <person name="Lee C."/>
            <person name="Westerfield M."/>
            <person name="de Jong P.J."/>
            <person name="Zon L.I."/>
            <person name="Postlethwait J.H."/>
            <person name="Nusslein-Volhard C."/>
            <person name="Hubbard T.J."/>
            <person name="Roest Crollius H."/>
            <person name="Rogers J."/>
            <person name="Stemple D.L."/>
        </authorList>
    </citation>
    <scope>NUCLEOTIDE SEQUENCE [LARGE SCALE GENOMIC DNA]</scope>
    <source>
        <strain>Tuebingen</strain>
    </source>
</reference>
<reference key="2">
    <citation type="journal article" date="2016" name="Brain">
        <title>Identification of mutations in the MYO9A gene in patients with congenital myasthenic syndrome.</title>
        <authorList>
            <person name="O'Connor E."/>
            <person name="Toepf A."/>
            <person name="Mueller J.S."/>
            <person name="Cox D."/>
            <person name="Evangelista T."/>
            <person name="Colomer J."/>
            <person name="Abicht A."/>
            <person name="Senderek J."/>
            <person name="Hasselmann O."/>
            <person name="Yaramis A."/>
            <person name="Laval S.H."/>
            <person name="Lochmueller H."/>
        </authorList>
    </citation>
    <scope>FUNCTION</scope>
    <scope>DISRUPTION PHENOTYPE</scope>
</reference>
<proteinExistence type="inferred from homology"/>